<organism>
    <name type="scientific">Trachypithecus cristatus</name>
    <name type="common">Silvered leaf-monkey</name>
    <name type="synonym">Presbytis cristata</name>
    <dbReference type="NCBI Taxonomy" id="122765"/>
    <lineage>
        <taxon>Eukaryota</taxon>
        <taxon>Metazoa</taxon>
        <taxon>Chordata</taxon>
        <taxon>Craniata</taxon>
        <taxon>Vertebrata</taxon>
        <taxon>Euteleostomi</taxon>
        <taxon>Mammalia</taxon>
        <taxon>Eutheria</taxon>
        <taxon>Euarchontoglires</taxon>
        <taxon>Primates</taxon>
        <taxon>Haplorrhini</taxon>
        <taxon>Catarrhini</taxon>
        <taxon>Cercopithecidae</taxon>
        <taxon>Colobinae</taxon>
        <taxon>Trachypithecus</taxon>
    </lineage>
</organism>
<proteinExistence type="inferred from homology"/>
<feature type="chain" id="PRO_0000006143" description="Cytochrome c oxidase subunit 6C">
    <location>
        <begin position="1"/>
        <end position="75"/>
    </location>
</feature>
<feature type="topological domain" description="Mitochondrial matrix" evidence="1">
    <location>
        <begin position="1"/>
        <end position="13"/>
    </location>
</feature>
<feature type="transmembrane region" description="Helical" evidence="1">
    <location>
        <begin position="14"/>
        <end position="54"/>
    </location>
</feature>
<feature type="topological domain" description="Mitochondrial intermembrane" evidence="1">
    <location>
        <begin position="55"/>
        <end position="75"/>
    </location>
</feature>
<accession>Q7YRK1</accession>
<name>COX6C_TRACR</name>
<reference key="1">
    <citation type="submission" date="2003-02" db="EMBL/GenBank/DDBJ databases">
        <title>Co-evolution in cytochrome c oxidase: 9 of 13 subunits show accelerated rates of nonsynonymous substitution in anthropoid primates.</title>
        <authorList>
            <person name="Doan J.W."/>
            <person name="Schmidt T.R."/>
            <person name="Wildman D.E."/>
            <person name="Goldberg A."/>
            <person name="Huttemann M."/>
            <person name="Goodman M."/>
            <person name="Weiss M.L."/>
            <person name="Grossman L.I."/>
        </authorList>
    </citation>
    <scope>NUCLEOTIDE SEQUENCE [MRNA]</scope>
</reference>
<sequence length="75" mass="8760">MAPEVLPKPQMRGLLAKRLRFHMVTAFVLSLGVAALYKFRVADKRKKAYADFYRNYDAMKDFEEMRKAGIFQSVK</sequence>
<keyword id="KW-0472">Membrane</keyword>
<keyword id="KW-0496">Mitochondrion</keyword>
<keyword id="KW-0999">Mitochondrion inner membrane</keyword>
<keyword id="KW-0812">Transmembrane</keyword>
<keyword id="KW-1133">Transmembrane helix</keyword>
<protein>
    <recommendedName>
        <fullName>Cytochrome c oxidase subunit 6C</fullName>
    </recommendedName>
    <alternativeName>
        <fullName>Cytochrome c oxidase polypeptide VIc</fullName>
    </alternativeName>
</protein>
<evidence type="ECO:0000250" key="1">
    <source>
        <dbReference type="UniProtKB" id="P04038"/>
    </source>
</evidence>
<evidence type="ECO:0000305" key="2"/>
<comment type="function">
    <text evidence="1">Component of the cytochrome c oxidase, the last enzyme in the mitochondrial electron transport chain which drives oxidative phosphorylation. The respiratory chain contains 3 multisubunit complexes succinate dehydrogenase (complex II, CII), ubiquinol-cytochrome c oxidoreductase (cytochrome b-c1 complex, complex III, CIII) and cytochrome c oxidase (complex IV, CIV), that cooperate to transfer electrons derived from NADH and succinate to molecular oxygen, creating an electrochemical gradient over the inner membrane that drives transmembrane transport and the ATP synthase. Cytochrome c oxidase is the component of the respiratory chain that catalyzes the reduction of oxygen to water. Electrons originating from reduced cytochrome c in the intermembrane space (IMS) are transferred via the dinuclear copper A center (CU(A)) of subunit 2 and heme A of subunit 1 to the active site in subunit 1, a binuclear center (BNC) formed by heme A3 and copper B (CU(B)). The BNC reduces molecular oxygen to 2 water molecules using 4 electrons from cytochrome c in the IMS and 4 protons from the mitochondrial matrix.</text>
</comment>
<comment type="pathway">
    <text evidence="1">Energy metabolism; oxidative phosphorylation.</text>
</comment>
<comment type="subunit">
    <text evidence="1">Component of the cytochrome c oxidase (complex IV, CIV), a multisubunit enzyme composed of 14 subunits. The complex is composed of a catalytic core of 3 subunits MT-CO1, MT-CO2 and MT-CO3, encoded in the mitochondrial DNA, and 11 supernumerary subunits COX4I, COX5A, COX5B, COX6A, COX6B, COX6C, COX7A, COX7B, COX7C, COX8 and NDUFA4, which are encoded in the nuclear genome. The complex exists as a monomer or a dimer and forms supercomplexes (SCs) in the inner mitochondrial membrane with NADH-ubiquinone oxidoreductase (complex I, CI) and ubiquinol-cytochrome c oxidoreductase (cytochrome b-c1 complex, complex III, CIII), resulting in different assemblies (supercomplex SCI(1)III(2)IV(1) and megacomplex MCI(2)III(2)IV(2)).</text>
</comment>
<comment type="subcellular location">
    <subcellularLocation>
        <location evidence="1">Mitochondrion inner membrane</location>
        <topology evidence="1">Single-pass membrane protein</topology>
    </subcellularLocation>
</comment>
<comment type="similarity">
    <text evidence="2">Belongs to the cytochrome c oxidase subunit 6c family.</text>
</comment>
<dbReference type="EMBL" id="AY236509">
    <property type="protein sequence ID" value="AAP43955.1"/>
    <property type="molecule type" value="mRNA"/>
</dbReference>
<dbReference type="SMR" id="Q7YRK1"/>
<dbReference type="UniPathway" id="UPA00705"/>
<dbReference type="GO" id="GO:0005743">
    <property type="term" value="C:mitochondrial inner membrane"/>
    <property type="evidence" value="ECO:0007669"/>
    <property type="project" value="UniProtKB-SubCell"/>
</dbReference>
<dbReference type="GO" id="GO:0006119">
    <property type="term" value="P:oxidative phosphorylation"/>
    <property type="evidence" value="ECO:0007669"/>
    <property type="project" value="UniProtKB-UniPathway"/>
</dbReference>
<dbReference type="CDD" id="cd22901">
    <property type="entry name" value="CcO_VIc"/>
    <property type="match status" value="1"/>
</dbReference>
<dbReference type="FunFam" id="4.10.93.10:FF:000001">
    <property type="entry name" value="Cytochrome c oxidase subunit 6C"/>
    <property type="match status" value="1"/>
</dbReference>
<dbReference type="Gene3D" id="4.10.93.10">
    <property type="entry name" value="Mitochondrial cytochrome c oxidase subunit VIc/VIIs"/>
    <property type="match status" value="1"/>
</dbReference>
<dbReference type="InterPro" id="IPR051389">
    <property type="entry name" value="Cytochrome_c_oxidase_VIc"/>
</dbReference>
<dbReference type="InterPro" id="IPR034884">
    <property type="entry name" value="Cytochrome_c_oxidase_VIc/VIIs"/>
</dbReference>
<dbReference type="InterPro" id="IPR037169">
    <property type="entry name" value="Cytochrome_c_oxidase_VIc_sf"/>
</dbReference>
<dbReference type="PANTHER" id="PTHR48416">
    <property type="entry name" value="CYTOCHROME C OXIDASE SUBUNIT 6C"/>
    <property type="match status" value="1"/>
</dbReference>
<dbReference type="PANTHER" id="PTHR48416:SF1">
    <property type="entry name" value="CYTOCHROME C OXIDASE SUBUNIT 6C"/>
    <property type="match status" value="1"/>
</dbReference>
<dbReference type="Pfam" id="PF02937">
    <property type="entry name" value="COX6C"/>
    <property type="match status" value="1"/>
</dbReference>
<dbReference type="SUPFAM" id="SSF81415">
    <property type="entry name" value="Mitochondrial cytochrome c oxidase subunit VIc"/>
    <property type="match status" value="1"/>
</dbReference>
<gene>
    <name type="primary">COX6C</name>
</gene>